<sequence>MVTIDNSMTATQLNDLPQTAQLRKNAQPELGLVCITFDKKVRFRTMTRTRYLKLSLAQRESSLREIYLHNLQCLHDALTFCQENNLRLYRISSALFPLSDMEDQIGSNILEEISTDLGKIGERSQALNIRMVLHPDQYVVLSSDSPEIVQTSIKILERHARTFDLLGLPRSPWSLMNIHGGKSQRSEQLIKVISNLPENIKSRLTLENDEYAYSTEEIFNVCQKAQIPMVFDAHHQICHENLDSYDHPSVAAMFYAARETWTNPEWQLVHISNGEQAFNDRKHSNLITNMPNIYRQAPWIEVEAKHKEVAIAHLRSWWLMGQ</sequence>
<name>UVSE_NOSS1</name>
<proteinExistence type="inferred from homology"/>
<organism>
    <name type="scientific">Nostoc sp. (strain PCC 7120 / SAG 25.82 / UTEX 2576)</name>
    <dbReference type="NCBI Taxonomy" id="103690"/>
    <lineage>
        <taxon>Bacteria</taxon>
        <taxon>Bacillati</taxon>
        <taxon>Cyanobacteriota</taxon>
        <taxon>Cyanophyceae</taxon>
        <taxon>Nostocales</taxon>
        <taxon>Nostocaceae</taxon>
        <taxon>Nostoc</taxon>
    </lineage>
</organism>
<comment type="function">
    <text evidence="1">Component in a DNA repair pathway. Removal of UV LIGHT damaged nucleotides. Recognizes pyrimidine dimers and cleave a phosphodiester bond immediately 5' to the lesion (By similarity).</text>
</comment>
<comment type="similarity">
    <text evidence="2">Belongs to the uve1/UvsE family.</text>
</comment>
<accession>Q8YXF0</accession>
<gene>
    <name evidence="2" type="primary">uvsE</name>
    <name type="ordered locus">alr1263</name>
</gene>
<feature type="chain" id="PRO_0000215030" description="UV DNA damage endonuclease">
    <location>
        <begin position="1"/>
        <end position="322"/>
    </location>
</feature>
<evidence type="ECO:0000250" key="1"/>
<evidence type="ECO:0000255" key="2">
    <source>
        <dbReference type="HAMAP-Rule" id="MF_00606"/>
    </source>
</evidence>
<keyword id="KW-0227">DNA damage</keyword>
<keyword id="KW-0228">DNA excision</keyword>
<keyword id="KW-0234">DNA repair</keyword>
<keyword id="KW-0255">Endonuclease</keyword>
<keyword id="KW-0378">Hydrolase</keyword>
<keyword id="KW-0540">Nuclease</keyword>
<keyword id="KW-1185">Reference proteome</keyword>
<dbReference type="EC" id="3.-.-.-" evidence="2"/>
<dbReference type="EMBL" id="BA000019">
    <property type="protein sequence ID" value="BAB73220.1"/>
    <property type="molecule type" value="Genomic_DNA"/>
</dbReference>
<dbReference type="PIR" id="AD1964">
    <property type="entry name" value="AD1964"/>
</dbReference>
<dbReference type="SMR" id="Q8YXF0"/>
<dbReference type="STRING" id="103690.gene:10493277"/>
<dbReference type="KEGG" id="ana:alr1263"/>
<dbReference type="eggNOG" id="COG4294">
    <property type="taxonomic scope" value="Bacteria"/>
</dbReference>
<dbReference type="Proteomes" id="UP000002483">
    <property type="component" value="Chromosome"/>
</dbReference>
<dbReference type="GO" id="GO:0004519">
    <property type="term" value="F:endonuclease activity"/>
    <property type="evidence" value="ECO:0007669"/>
    <property type="project" value="UniProtKB-UniRule"/>
</dbReference>
<dbReference type="GO" id="GO:0006289">
    <property type="term" value="P:nucleotide-excision repair"/>
    <property type="evidence" value="ECO:0007669"/>
    <property type="project" value="InterPro"/>
</dbReference>
<dbReference type="GO" id="GO:0006290">
    <property type="term" value="P:pyrimidine dimer repair"/>
    <property type="evidence" value="ECO:0007669"/>
    <property type="project" value="UniProtKB-UniRule"/>
</dbReference>
<dbReference type="GO" id="GO:0009411">
    <property type="term" value="P:response to UV"/>
    <property type="evidence" value="ECO:0007669"/>
    <property type="project" value="InterPro"/>
</dbReference>
<dbReference type="Gene3D" id="3.20.20.150">
    <property type="entry name" value="Divalent-metal-dependent TIM barrel enzymes"/>
    <property type="match status" value="1"/>
</dbReference>
<dbReference type="HAMAP" id="MF_00606">
    <property type="entry name" value="UV_endonuclease"/>
    <property type="match status" value="1"/>
</dbReference>
<dbReference type="InterPro" id="IPR004601">
    <property type="entry name" value="UvdE"/>
</dbReference>
<dbReference type="InterPro" id="IPR023520">
    <property type="entry name" value="UvdE_bac"/>
</dbReference>
<dbReference type="InterPro" id="IPR036237">
    <property type="entry name" value="Xyl_isomerase-like_sf"/>
</dbReference>
<dbReference type="NCBIfam" id="NF002640">
    <property type="entry name" value="PRK02308.1-4"/>
    <property type="match status" value="1"/>
</dbReference>
<dbReference type="NCBIfam" id="TIGR00629">
    <property type="entry name" value="uvde"/>
    <property type="match status" value="1"/>
</dbReference>
<dbReference type="PANTHER" id="PTHR31290">
    <property type="entry name" value="UV-DAMAGE ENDONUCLEASE"/>
    <property type="match status" value="1"/>
</dbReference>
<dbReference type="PANTHER" id="PTHR31290:SF5">
    <property type="entry name" value="UV-DAMAGE ENDONUCLEASE"/>
    <property type="match status" value="1"/>
</dbReference>
<dbReference type="Pfam" id="PF03851">
    <property type="entry name" value="UvdE"/>
    <property type="match status" value="1"/>
</dbReference>
<dbReference type="SUPFAM" id="SSF51658">
    <property type="entry name" value="Xylose isomerase-like"/>
    <property type="match status" value="1"/>
</dbReference>
<protein>
    <recommendedName>
        <fullName evidence="2">UV DNA damage endonuclease</fullName>
        <shortName evidence="2">UV-endonuclease</shortName>
        <shortName evidence="2">UVED</shortName>
        <ecNumber evidence="2">3.-.-.-</ecNumber>
    </recommendedName>
</protein>
<reference key="1">
    <citation type="journal article" date="2001" name="DNA Res.">
        <title>Complete genomic sequence of the filamentous nitrogen-fixing cyanobacterium Anabaena sp. strain PCC 7120.</title>
        <authorList>
            <person name="Kaneko T."/>
            <person name="Nakamura Y."/>
            <person name="Wolk C.P."/>
            <person name="Kuritz T."/>
            <person name="Sasamoto S."/>
            <person name="Watanabe A."/>
            <person name="Iriguchi M."/>
            <person name="Ishikawa A."/>
            <person name="Kawashima K."/>
            <person name="Kimura T."/>
            <person name="Kishida Y."/>
            <person name="Kohara M."/>
            <person name="Matsumoto M."/>
            <person name="Matsuno A."/>
            <person name="Muraki A."/>
            <person name="Nakazaki N."/>
            <person name="Shimpo S."/>
            <person name="Sugimoto M."/>
            <person name="Takazawa M."/>
            <person name="Yamada M."/>
            <person name="Yasuda M."/>
            <person name="Tabata S."/>
        </authorList>
    </citation>
    <scope>NUCLEOTIDE SEQUENCE [LARGE SCALE GENOMIC DNA]</scope>
    <source>
        <strain>PCC 7120 / SAG 25.82 / UTEX 2576</strain>
    </source>
</reference>